<reference key="1">
    <citation type="journal article" date="1993" name="Nat. Genet.">
        <title>Phosphorylase kinase deficiency in I-strain mice is associated with a frameshift mutation in the alpha subunit muscle isoform.</title>
        <authorList>
            <person name="Schneider A."/>
            <person name="Davidson J.J."/>
            <person name="Wuellrich A."/>
            <person name="Kilimann M.W."/>
        </authorList>
    </citation>
    <scope>NUCLEOTIDE SEQUENCE [MRNA] (ISOFORMS 1 AND 2)</scope>
    <scope>INVOLVEMENT IN PHOSPHORYLASE KINASE DEFICIENCY</scope>
    <source>
        <strain>BALB/cJ</strain>
        <tissue>Skeletal muscle</tissue>
    </source>
</reference>
<reference key="2">
    <citation type="journal article" date="2009" name="PLoS Biol.">
        <title>Lineage-specific biology revealed by a finished genome assembly of the mouse.</title>
        <authorList>
            <person name="Church D.M."/>
            <person name="Goodstadt L."/>
            <person name="Hillier L.W."/>
            <person name="Zody M.C."/>
            <person name="Goldstein S."/>
            <person name="She X."/>
            <person name="Bult C.J."/>
            <person name="Agarwala R."/>
            <person name="Cherry J.L."/>
            <person name="DiCuccio M."/>
            <person name="Hlavina W."/>
            <person name="Kapustin Y."/>
            <person name="Meric P."/>
            <person name="Maglott D."/>
            <person name="Birtle Z."/>
            <person name="Marques A.C."/>
            <person name="Graves T."/>
            <person name="Zhou S."/>
            <person name="Teague B."/>
            <person name="Potamousis K."/>
            <person name="Churas C."/>
            <person name="Place M."/>
            <person name="Herschleb J."/>
            <person name="Runnheim R."/>
            <person name="Forrest D."/>
            <person name="Amos-Landgraf J."/>
            <person name="Schwartz D.C."/>
            <person name="Cheng Z."/>
            <person name="Lindblad-Toh K."/>
            <person name="Eichler E.E."/>
            <person name="Ponting C.P."/>
        </authorList>
    </citation>
    <scope>NUCLEOTIDE SEQUENCE [LARGE SCALE GENOMIC DNA]</scope>
    <source>
        <strain>C57BL/6J</strain>
    </source>
</reference>
<reference key="3">
    <citation type="journal article" date="1989" name="Proc. Natl. Acad. Sci. U.S.A.">
        <title>I/Lyn mouse phosphorylase kinase deficiency: mutation disrupts expression of the alpha/alpha'-subunit mRNAs.</title>
        <authorList>
            <person name="Bender P.K."/>
            <person name="Lalley P.A."/>
        </authorList>
    </citation>
    <scope>NUCLEOTIDE SEQUENCE [MRNA] OF 243-579</scope>
</reference>
<reference key="4">
    <citation type="journal article" date="2010" name="Cell">
        <title>A tissue-specific atlas of mouse protein phosphorylation and expression.</title>
        <authorList>
            <person name="Huttlin E.L."/>
            <person name="Jedrychowski M.P."/>
            <person name="Elias J.E."/>
            <person name="Goswami T."/>
            <person name="Rad R."/>
            <person name="Beausoleil S.A."/>
            <person name="Villen J."/>
            <person name="Haas W."/>
            <person name="Sowa M.E."/>
            <person name="Gygi S.P."/>
        </authorList>
    </citation>
    <scope>PHOSPHORYLATION [LARGE SCALE ANALYSIS] AT SER-759; SER-973 AND SER-986</scope>
    <scope>IDENTIFICATION BY MASS SPECTROMETRY [LARGE SCALE ANALYSIS]</scope>
    <source>
        <tissue>Brain</tissue>
        <tissue>Brown adipose tissue</tissue>
        <tissue>Heart</tissue>
        <tissue>Kidney</tissue>
        <tissue>Lung</tissue>
    </source>
</reference>
<accession>P18826</accession>
<accession>A2AI90</accession>
<feature type="chain" id="PRO_0000057727" description="Phosphorylase b kinase regulatory subunit alpha, skeletal muscle isoform">
    <location>
        <begin position="1"/>
        <end position="1241"/>
    </location>
</feature>
<feature type="region of interest" description="Calmodulin-binding" evidence="4">
    <location>
        <begin position="811"/>
        <end position="841"/>
    </location>
</feature>
<feature type="region of interest" description="Calmodulin-binding" evidence="4">
    <location>
        <begin position="1064"/>
        <end position="1104"/>
    </location>
</feature>
<feature type="modified residue" description="Phosphoserine" evidence="3">
    <location>
        <position position="629"/>
    </location>
</feature>
<feature type="modified residue" description="Phosphoserine" evidence="2">
    <location>
        <position position="730"/>
    </location>
</feature>
<feature type="modified residue" description="Phosphoserine" evidence="2">
    <location>
        <position position="736"/>
    </location>
</feature>
<feature type="modified residue" description="Phosphoserine" evidence="3">
    <location>
        <position position="739"/>
    </location>
</feature>
<feature type="modified residue" description="Phosphoserine" evidence="8">
    <location>
        <position position="759"/>
    </location>
</feature>
<feature type="modified residue" description="Phosphoserine" evidence="3">
    <location>
        <position position="812"/>
    </location>
</feature>
<feature type="modified residue" description="Phosphoserine" evidence="8">
    <location>
        <position position="973"/>
    </location>
</feature>
<feature type="modified residue" description="Phosphoserine" evidence="2">
    <location>
        <position position="982"/>
    </location>
</feature>
<feature type="modified residue" description="Phosphoserine" evidence="8">
    <location>
        <position position="986"/>
    </location>
</feature>
<feature type="modified residue" description="Phosphoserine; by autocatalysis" evidence="1">
    <location>
        <position position="1008"/>
    </location>
</feature>
<feature type="modified residue" description="Phosphoserine; by PKA" evidence="1">
    <location>
        <position position="1019"/>
    </location>
</feature>
<feature type="modified residue" description="Phosphoserine" evidence="1">
    <location>
        <position position="1021"/>
    </location>
</feature>
<feature type="modified residue" description="Phosphoserine" evidence="1">
    <location>
        <position position="1024"/>
    </location>
</feature>
<feature type="modified residue" description="Phosphoserine" evidence="3">
    <location>
        <position position="1131"/>
    </location>
</feature>
<feature type="lipid moiety-binding region" description="S-farnesyl cysteine" evidence="1">
    <location>
        <position position="1238"/>
    </location>
</feature>
<feature type="splice variant" id="VSP_004698" description="In isoform 2." evidence="6">
    <location>
        <begin position="1026"/>
        <end position="1042"/>
    </location>
</feature>
<feature type="sequence conflict" description="In Ref. 1; CAA52687." evidence="7" ref="1">
    <original>K</original>
    <variation>P</variation>
    <location>
        <position position="109"/>
    </location>
</feature>
<feature type="sequence conflict" description="In Ref. 1; CAA52687 and 3; AAA39927." evidence="7" ref="1 3">
    <original>N</original>
    <variation>Q</variation>
    <location>
        <position position="309"/>
    </location>
</feature>
<feature type="sequence conflict" description="In Ref. 1; CAA52687 and 3; AAA39927." evidence="7" ref="1 3">
    <original>E</original>
    <variation>N</variation>
    <location>
        <position position="314"/>
    </location>
</feature>
<feature type="sequence conflict" description="In Ref. 1; CAA52687." evidence="7" ref="1">
    <original>L</original>
    <variation>I</variation>
    <location>
        <position position="719"/>
    </location>
</feature>
<keyword id="KW-0025">Alternative splicing</keyword>
<keyword id="KW-0112">Calmodulin-binding</keyword>
<keyword id="KW-0119">Carbohydrate metabolism</keyword>
<keyword id="KW-1003">Cell membrane</keyword>
<keyword id="KW-0321">Glycogen metabolism</keyword>
<keyword id="KW-0449">Lipoprotein</keyword>
<keyword id="KW-0472">Membrane</keyword>
<keyword id="KW-0514">Muscle protein</keyword>
<keyword id="KW-0597">Phosphoprotein</keyword>
<keyword id="KW-0636">Prenylation</keyword>
<keyword id="KW-1185">Reference proteome</keyword>
<name>KPB1_MOUSE</name>
<sequence>MRSRSNSGVRLDGYARLVHQTILCHQNPVTGLLPASYDQKDAWVRDNVYSILAVWGLGLAYRKNADRDEDKAKAYELEQSVVKLMRGLLHCMIRQVDKVESFKYSQSTKDSLHAKYNTKTCATVVGDDQWGHLQLDATSVYLLFLAQMTASGLHIIHSLDEVNFIQNLVFYIEAAYKTADFGIWERGDKTNQGISELNASSVGMAKAALEALDELDLFGVKGGPQSVIHVLADEVQHCQSILNSLLPRASTSKEVDASLLSVVSFPAFAVEDSHLVELTKQEIITKLQGRYGCCRFLRDGYKTPKEDPNRLYYEPAELKLFENIECEWPLFWTYFILDGIFSGNVEQVQEYREALDAVLIKGKNGVPLLPELYSVPPDRVDEEYQNPHTVDRVPMGKLPHMWGQSLYILGSLMAEGFLAPGEIDPLNRRFSTVPKPDVVVQVSILAETEEIKAILKDKGIDVETIAEVYPIRVQPARILSHIYSSLGCNSRMKLSGRPYRLMGVLGTSKLYDIRKTIFTFTPQFIDQQQFYLALDNQMIVEMLRTDLSYLCSRWRMTGQPTITFPISHTMLDEDGTSLNSSILAALRKMQDGYFGGARIQTGKLSEFLTTSCCTHLSFMDPGPEGKLYSEDYDEDYEDDLDSGNWMDSYDSTSNARCGDEVARYLDRLLAHTVPHPKLAPTSRKGGLDRFRAAVQTTCDLMSLVAKAKELHIQNVHMYLPTKLFQPSRPSLNLLDSPESPQDSQVPSVHVEVHLPRDQSGEVDFQSLVSQLKETSSLQEQADILYMLYSMKGPDWNTELYEEGGATVRELLSELYVKVGEIRHWGLIRYISGILRKKVEALDEACTDLLSYQKHLTVGLPPEPREKTISAPLPYEALTKLIDEASEGDMSISTLTQEIMVYLAMYMRTQPGLFAEMFRLRIGLIIQVMATELAHSLRCSAEEATEGLMNLSPSAMKNLLHHILSGKEFGVERSVRPTDSNVSPAISIHEIGAVGATKTERTGIMQLKSEIKQVEFRRLSVSMESQTSGGHPSGVDLMSPSFLSPAACIAASSGSFPTVCDHQTSKDSRQGQWQRRRRLDGALNRVPIGFYQKVWKILQKCHGLSVEGFVLPSSTTREMTPGEIKFSVHVESVLNRVPQPEYRQLLVEAILVLTMLADIEIHSIGSIIAVEKIVHIANDLFLQEQKTLGADDTMLAKDPASGICTLLYDSAPSGRFGTMTYLSKAAATYVQEFLPHSLCAMQ</sequence>
<protein>
    <recommendedName>
        <fullName>Phosphorylase b kinase regulatory subunit alpha, skeletal muscle isoform</fullName>
        <shortName>Phosphorylase kinase alpha M subunit</shortName>
    </recommendedName>
</protein>
<proteinExistence type="evidence at protein level"/>
<evidence type="ECO:0000250" key="1">
    <source>
        <dbReference type="UniProtKB" id="P18688"/>
    </source>
</evidence>
<evidence type="ECO:0000250" key="2">
    <source>
        <dbReference type="UniProtKB" id="P46020"/>
    </source>
</evidence>
<evidence type="ECO:0000250" key="3">
    <source>
        <dbReference type="UniProtKB" id="Q64649"/>
    </source>
</evidence>
<evidence type="ECO:0000255" key="4"/>
<evidence type="ECO:0000269" key="5">
    <source>
    </source>
</evidence>
<evidence type="ECO:0000303" key="6">
    <source>
    </source>
</evidence>
<evidence type="ECO:0000305" key="7"/>
<evidence type="ECO:0007744" key="8">
    <source>
    </source>
</evidence>
<gene>
    <name type="primary">Phka1</name>
</gene>
<comment type="function">
    <text>Phosphorylase b kinase catalyzes the phosphorylation of serine in certain substrates, including troponin I. The alpha chain may bind calmodulin.</text>
</comment>
<comment type="activity regulation">
    <text>By phosphorylation of various serine residues and by calcium.</text>
</comment>
<comment type="pathway">
    <text>Glycan biosynthesis; glycogen metabolism.</text>
</comment>
<comment type="subunit">
    <text>Hexadecamer of 4 heterotetramers, each composed of alpha, beta, gamma, and delta subunits. Alpha (PHKA1 or PHKA2) and beta (PHKB) are regulatory subunits, gamma (PHKG1 or PHKG2) is the catalytic subunit, and delta is calmodulin.</text>
</comment>
<comment type="subcellular location">
    <subcellularLocation>
        <location evidence="7">Cell membrane</location>
        <topology evidence="7">Lipid-anchor</topology>
        <orientation evidence="7">Cytoplasmic side</orientation>
    </subcellularLocation>
</comment>
<comment type="alternative products">
    <event type="alternative splicing"/>
    <isoform>
        <id>P18826-1</id>
        <name>1</name>
        <name>ABC</name>
        <sequence type="displayed"/>
    </isoform>
    <isoform>
        <id>P18826-2</id>
        <name>2</name>
        <name>AC</name>
        <sequence type="described" ref="VSP_004698"/>
    </isoform>
</comment>
<comment type="tissue specificity">
    <text>Both isoforms are expressed in muscle.</text>
</comment>
<comment type="PTM">
    <text evidence="1">Although the final Cys may be farnesylated, the terminal tripeptide is probably not removed, and the C-terminus is not methylated.</text>
</comment>
<comment type="disease">
    <text evidence="5">Defects in Phka1 are the cause of phosphorylase kinase deficiency in I-strain mice.</text>
</comment>
<comment type="similarity">
    <text evidence="7">Belongs to the phosphorylase b kinase regulatory chain family.</text>
</comment>
<dbReference type="EMBL" id="X74616">
    <property type="protein sequence ID" value="CAA52687.1"/>
    <property type="molecule type" value="mRNA"/>
</dbReference>
<dbReference type="EMBL" id="X73877">
    <property type="protein sequence ID" value="CAA52085.1"/>
    <property type="molecule type" value="Transcribed_RNA"/>
</dbReference>
<dbReference type="EMBL" id="AL732405">
    <property type="status" value="NOT_ANNOTATED_CDS"/>
    <property type="molecule type" value="Genomic_DNA"/>
</dbReference>
<dbReference type="EMBL" id="AL805925">
    <property type="status" value="NOT_ANNOTATED_CDS"/>
    <property type="molecule type" value="Genomic_DNA"/>
</dbReference>
<dbReference type="EMBL" id="M28867">
    <property type="protein sequence ID" value="AAA39927.1"/>
    <property type="molecule type" value="mRNA"/>
</dbReference>
<dbReference type="CCDS" id="CCDS30323.1">
    <molecule id="P18826-1"/>
</dbReference>
<dbReference type="PIR" id="S40528">
    <property type="entry name" value="S40528"/>
</dbReference>
<dbReference type="RefSeq" id="NP_032858.2">
    <molecule id="P18826-1"/>
    <property type="nucleotide sequence ID" value="NM_008832.2"/>
</dbReference>
<dbReference type="SMR" id="P18826"/>
<dbReference type="BioGRID" id="202145">
    <property type="interactions" value="2"/>
</dbReference>
<dbReference type="FunCoup" id="P18826">
    <property type="interactions" value="684"/>
</dbReference>
<dbReference type="IntAct" id="P18826">
    <property type="interactions" value="2"/>
</dbReference>
<dbReference type="MINT" id="P18826"/>
<dbReference type="STRING" id="10090.ENSMUSP00000061991"/>
<dbReference type="GlyGen" id="P18826">
    <property type="glycosylation" value="1 site, 1 O-linked glycan (1 site)"/>
</dbReference>
<dbReference type="iPTMnet" id="P18826"/>
<dbReference type="PhosphoSitePlus" id="P18826"/>
<dbReference type="SwissPalm" id="P18826"/>
<dbReference type="jPOST" id="P18826"/>
<dbReference type="PaxDb" id="10090-ENSMUSP00000061991"/>
<dbReference type="ProteomicsDB" id="263643">
    <molecule id="P18826-1"/>
</dbReference>
<dbReference type="ProteomicsDB" id="263644">
    <molecule id="P18826-2"/>
</dbReference>
<dbReference type="Pumba" id="P18826"/>
<dbReference type="Antibodypedia" id="339">
    <property type="antibodies" value="99 antibodies from 27 providers"/>
</dbReference>
<dbReference type="DNASU" id="18679"/>
<dbReference type="Ensembl" id="ENSMUST00000052012.14">
    <molecule id="P18826-1"/>
    <property type="protein sequence ID" value="ENSMUSP00000061991.8"/>
    <property type="gene ID" value="ENSMUSG00000034055.17"/>
</dbReference>
<dbReference type="Ensembl" id="ENSMUST00000113611.3">
    <molecule id="P18826-2"/>
    <property type="protein sequence ID" value="ENSMUSP00000109241.3"/>
    <property type="gene ID" value="ENSMUSG00000034055.17"/>
</dbReference>
<dbReference type="GeneID" id="18679"/>
<dbReference type="KEGG" id="mmu:18679"/>
<dbReference type="UCSC" id="uc009tyr.1">
    <molecule id="P18826-1"/>
    <property type="organism name" value="mouse"/>
</dbReference>
<dbReference type="AGR" id="MGI:97576"/>
<dbReference type="CTD" id="5255"/>
<dbReference type="MGI" id="MGI:97576">
    <property type="gene designation" value="Phka1"/>
</dbReference>
<dbReference type="VEuPathDB" id="HostDB:ENSMUSG00000034055"/>
<dbReference type="eggNOG" id="KOG3635">
    <property type="taxonomic scope" value="Eukaryota"/>
</dbReference>
<dbReference type="GeneTree" id="ENSGT00950000183118"/>
<dbReference type="InParanoid" id="P18826"/>
<dbReference type="OMA" id="NVYSIYC"/>
<dbReference type="OrthoDB" id="5971574at2759"/>
<dbReference type="PhylomeDB" id="P18826"/>
<dbReference type="TreeFam" id="TF313970"/>
<dbReference type="Reactome" id="R-MMU-70221">
    <property type="pathway name" value="Glycogen breakdown (glycogenolysis)"/>
</dbReference>
<dbReference type="UniPathway" id="UPA00163"/>
<dbReference type="BioGRID-ORCS" id="18679">
    <property type="hits" value="2 hits in 81 CRISPR screens"/>
</dbReference>
<dbReference type="PRO" id="PR:P18826"/>
<dbReference type="Proteomes" id="UP000000589">
    <property type="component" value="Chromosome X"/>
</dbReference>
<dbReference type="RNAct" id="P18826">
    <property type="molecule type" value="protein"/>
</dbReference>
<dbReference type="Bgee" id="ENSMUSG00000034055">
    <property type="expression patterns" value="Expressed in triceps brachii and 235 other cell types or tissues"/>
</dbReference>
<dbReference type="ExpressionAtlas" id="P18826">
    <property type="expression patterns" value="baseline and differential"/>
</dbReference>
<dbReference type="GO" id="GO:0005886">
    <property type="term" value="C:plasma membrane"/>
    <property type="evidence" value="ECO:0007669"/>
    <property type="project" value="UniProtKB-SubCell"/>
</dbReference>
<dbReference type="GO" id="GO:0005516">
    <property type="term" value="F:calmodulin binding"/>
    <property type="evidence" value="ECO:0007669"/>
    <property type="project" value="UniProtKB-KW"/>
</dbReference>
<dbReference type="GO" id="GO:0005977">
    <property type="term" value="P:glycogen metabolic process"/>
    <property type="evidence" value="ECO:0007669"/>
    <property type="project" value="UniProtKB-UniPathway"/>
</dbReference>
<dbReference type="GO" id="GO:0045819">
    <property type="term" value="P:positive regulation of glycogen catabolic process"/>
    <property type="evidence" value="ECO:0007669"/>
    <property type="project" value="Ensembl"/>
</dbReference>
<dbReference type="FunFam" id="1.50.10.10:FF:000004">
    <property type="entry name" value="Phosphorylase b kinase regulatory subunit"/>
    <property type="match status" value="1"/>
</dbReference>
<dbReference type="Gene3D" id="1.50.10.10">
    <property type="match status" value="1"/>
</dbReference>
<dbReference type="InterPro" id="IPR008928">
    <property type="entry name" value="6-hairpin_glycosidase_sf"/>
</dbReference>
<dbReference type="InterPro" id="IPR012341">
    <property type="entry name" value="6hp_glycosidase-like_sf"/>
</dbReference>
<dbReference type="InterPro" id="IPR011613">
    <property type="entry name" value="GH15-like"/>
</dbReference>
<dbReference type="InterPro" id="IPR045583">
    <property type="entry name" value="KPBA/B_C"/>
</dbReference>
<dbReference type="InterPro" id="IPR008734">
    <property type="entry name" value="PHK_A/B_su"/>
</dbReference>
<dbReference type="PANTHER" id="PTHR10749">
    <property type="entry name" value="PHOSPHORYLASE B KINASE REGULATORY SUBUNIT"/>
    <property type="match status" value="1"/>
</dbReference>
<dbReference type="PANTHER" id="PTHR10749:SF4">
    <property type="entry name" value="PHOSPHORYLASE B KINASE REGULATORY SUBUNIT ALPHA, SKELETAL MUSCLE ISOFORM"/>
    <property type="match status" value="1"/>
</dbReference>
<dbReference type="Pfam" id="PF00723">
    <property type="entry name" value="Glyco_hydro_15"/>
    <property type="match status" value="1"/>
</dbReference>
<dbReference type="Pfam" id="PF19292">
    <property type="entry name" value="KPBB_C"/>
    <property type="match status" value="1"/>
</dbReference>
<dbReference type="SUPFAM" id="SSF48208">
    <property type="entry name" value="Six-hairpin glycosidases"/>
    <property type="match status" value="1"/>
</dbReference>
<organism>
    <name type="scientific">Mus musculus</name>
    <name type="common">Mouse</name>
    <dbReference type="NCBI Taxonomy" id="10090"/>
    <lineage>
        <taxon>Eukaryota</taxon>
        <taxon>Metazoa</taxon>
        <taxon>Chordata</taxon>
        <taxon>Craniata</taxon>
        <taxon>Vertebrata</taxon>
        <taxon>Euteleostomi</taxon>
        <taxon>Mammalia</taxon>
        <taxon>Eutheria</taxon>
        <taxon>Euarchontoglires</taxon>
        <taxon>Glires</taxon>
        <taxon>Rodentia</taxon>
        <taxon>Myomorpha</taxon>
        <taxon>Muroidea</taxon>
        <taxon>Muridae</taxon>
        <taxon>Murinae</taxon>
        <taxon>Mus</taxon>
        <taxon>Mus</taxon>
    </lineage>
</organism>